<evidence type="ECO:0000255" key="1">
    <source>
        <dbReference type="HAMAP-Rule" id="MF_01341"/>
    </source>
</evidence>
<evidence type="ECO:0000256" key="2">
    <source>
        <dbReference type="SAM" id="MobiDB-lite"/>
    </source>
</evidence>
<evidence type="ECO:0000305" key="3"/>
<proteinExistence type="inferred from homology"/>
<dbReference type="EMBL" id="BA000043">
    <property type="protein sequence ID" value="BAD74410.1"/>
    <property type="molecule type" value="Genomic_DNA"/>
</dbReference>
<dbReference type="RefSeq" id="WP_011229638.1">
    <property type="nucleotide sequence ID" value="NC_006510.1"/>
</dbReference>
<dbReference type="SMR" id="Q5L3S0"/>
<dbReference type="STRING" id="235909.GK0125"/>
<dbReference type="GeneID" id="89612881"/>
<dbReference type="KEGG" id="gka:GK0125"/>
<dbReference type="eggNOG" id="COG0200">
    <property type="taxonomic scope" value="Bacteria"/>
</dbReference>
<dbReference type="HOGENOM" id="CLU_055188_4_2_9"/>
<dbReference type="Proteomes" id="UP000001172">
    <property type="component" value="Chromosome"/>
</dbReference>
<dbReference type="GO" id="GO:0022625">
    <property type="term" value="C:cytosolic large ribosomal subunit"/>
    <property type="evidence" value="ECO:0007669"/>
    <property type="project" value="TreeGrafter"/>
</dbReference>
<dbReference type="GO" id="GO:0019843">
    <property type="term" value="F:rRNA binding"/>
    <property type="evidence" value="ECO:0007669"/>
    <property type="project" value="UniProtKB-UniRule"/>
</dbReference>
<dbReference type="GO" id="GO:0003735">
    <property type="term" value="F:structural constituent of ribosome"/>
    <property type="evidence" value="ECO:0007669"/>
    <property type="project" value="InterPro"/>
</dbReference>
<dbReference type="GO" id="GO:0006412">
    <property type="term" value="P:translation"/>
    <property type="evidence" value="ECO:0007669"/>
    <property type="project" value="UniProtKB-UniRule"/>
</dbReference>
<dbReference type="FunFam" id="3.100.10.10:FF:000004">
    <property type="entry name" value="50S ribosomal protein L15"/>
    <property type="match status" value="1"/>
</dbReference>
<dbReference type="Gene3D" id="3.100.10.10">
    <property type="match status" value="1"/>
</dbReference>
<dbReference type="HAMAP" id="MF_01341">
    <property type="entry name" value="Ribosomal_uL15"/>
    <property type="match status" value="1"/>
</dbReference>
<dbReference type="InterPro" id="IPR030878">
    <property type="entry name" value="Ribosomal_uL15"/>
</dbReference>
<dbReference type="InterPro" id="IPR021131">
    <property type="entry name" value="Ribosomal_uL15/eL18"/>
</dbReference>
<dbReference type="InterPro" id="IPR036227">
    <property type="entry name" value="Ribosomal_uL15/eL18_sf"/>
</dbReference>
<dbReference type="InterPro" id="IPR005749">
    <property type="entry name" value="Ribosomal_uL15_bac-type"/>
</dbReference>
<dbReference type="InterPro" id="IPR001196">
    <property type="entry name" value="Ribosomal_uL15_CS"/>
</dbReference>
<dbReference type="NCBIfam" id="TIGR01071">
    <property type="entry name" value="rplO_bact"/>
    <property type="match status" value="1"/>
</dbReference>
<dbReference type="PANTHER" id="PTHR12934">
    <property type="entry name" value="50S RIBOSOMAL PROTEIN L15"/>
    <property type="match status" value="1"/>
</dbReference>
<dbReference type="PANTHER" id="PTHR12934:SF11">
    <property type="entry name" value="LARGE RIBOSOMAL SUBUNIT PROTEIN UL15M"/>
    <property type="match status" value="1"/>
</dbReference>
<dbReference type="Pfam" id="PF00828">
    <property type="entry name" value="Ribosomal_L27A"/>
    <property type="match status" value="1"/>
</dbReference>
<dbReference type="SUPFAM" id="SSF52080">
    <property type="entry name" value="Ribosomal proteins L15p and L18e"/>
    <property type="match status" value="1"/>
</dbReference>
<dbReference type="PROSITE" id="PS00475">
    <property type="entry name" value="RIBOSOMAL_L15"/>
    <property type="match status" value="1"/>
</dbReference>
<keyword id="KW-1185">Reference proteome</keyword>
<keyword id="KW-0687">Ribonucleoprotein</keyword>
<keyword id="KW-0689">Ribosomal protein</keyword>
<keyword id="KW-0694">RNA-binding</keyword>
<keyword id="KW-0699">rRNA-binding</keyword>
<gene>
    <name evidence="1" type="primary">rplO</name>
    <name type="ordered locus">GK0125</name>
</gene>
<accession>Q5L3S0</accession>
<feature type="chain" id="PRO_0000104726" description="Large ribosomal subunit protein uL15">
    <location>
        <begin position="1"/>
        <end position="146"/>
    </location>
</feature>
<feature type="region of interest" description="Disordered" evidence="2">
    <location>
        <begin position="1"/>
        <end position="51"/>
    </location>
</feature>
<feature type="compositionally biased region" description="Gly residues" evidence="2">
    <location>
        <begin position="21"/>
        <end position="35"/>
    </location>
</feature>
<feature type="compositionally biased region" description="Gly residues" evidence="2">
    <location>
        <begin position="42"/>
        <end position="51"/>
    </location>
</feature>
<reference key="1">
    <citation type="journal article" date="2004" name="Nucleic Acids Res.">
        <title>Thermoadaptation trait revealed by the genome sequence of thermophilic Geobacillus kaustophilus.</title>
        <authorList>
            <person name="Takami H."/>
            <person name="Takaki Y."/>
            <person name="Chee G.-J."/>
            <person name="Nishi S."/>
            <person name="Shimamura S."/>
            <person name="Suzuki H."/>
            <person name="Matsui S."/>
            <person name="Uchiyama I."/>
        </authorList>
    </citation>
    <scope>NUCLEOTIDE SEQUENCE [LARGE SCALE GENOMIC DNA]</scope>
    <source>
        <strain>HTA426</strain>
    </source>
</reference>
<protein>
    <recommendedName>
        <fullName evidence="1">Large ribosomal subunit protein uL15</fullName>
    </recommendedName>
    <alternativeName>
        <fullName evidence="3">50S ribosomal protein L15</fullName>
    </alternativeName>
</protein>
<organism>
    <name type="scientific">Geobacillus kaustophilus (strain HTA426)</name>
    <dbReference type="NCBI Taxonomy" id="235909"/>
    <lineage>
        <taxon>Bacteria</taxon>
        <taxon>Bacillati</taxon>
        <taxon>Bacillota</taxon>
        <taxon>Bacilli</taxon>
        <taxon>Bacillales</taxon>
        <taxon>Anoxybacillaceae</taxon>
        <taxon>Geobacillus</taxon>
        <taxon>Geobacillus thermoleovorans group</taxon>
    </lineage>
</organism>
<comment type="function">
    <text evidence="1">Binds to the 23S rRNA.</text>
</comment>
<comment type="subunit">
    <text evidence="1">Part of the 50S ribosomal subunit.</text>
</comment>
<comment type="similarity">
    <text evidence="1">Belongs to the universal ribosomal protein uL15 family.</text>
</comment>
<name>RL15_GEOKA</name>
<sequence length="146" mass="15606">MKLHELQPAPGSRKKAVRVGRGIGSGNGKTSGRGQKGQNARSGGGVRLGFEGGQTPLFRRLPKRGFTNINRKEYAVVNLEKLNRFEDGTEVTPELLLETGVISKLKSGVKILGKGQIEKKLTVKAHKFSASAKEAIEAAGGKTEVI</sequence>